<sequence>MKATQTLIATTKELPKEAVLISHQYMLKAGLIKKLASGIYTWMPLGLKVLQKIQNIVRDEMNKAGASELLLPSILPSELLQETHRWDKFGPELLKLHDRHNRDFCYGPTHEEPIVDMARDTIKSYKQLPLNLYQIQTKFRDEIRPRFGVMRAREFIMKDAYSFHENSQCLRNTYNTMYATYCNILDKIGLAYRPVKADTGAIGGDNSHEFQVLANAGEDIICYSNGSDYAANIELATYAKPDLSKRVNSQNTIEKIHTPNIKTIEKLCKEMSFDIKKTIKTMVIKDAGGNFFALVIRGDHELNETKINKLDQIIAPYTLATKEEIFSIFNANPGSLGIYNCPISIIADYSAIAITDLVCGANEDDYHFTNVNWDRDVTNYQIADIRNVVTGDISPDGKGTLELTNGIEVGHIFELEDVYSKPMNANIIGQDGKSKPMLMGCYGFGVSRVMAAAIEQSHDENGIIWPESIAPYQVAILPINYNKSDKVKEVADKLCQDLLGDGIDVLLDDRGARPGVMFADADLIGYSHHVVIGDRLLEQGLIEYKNRKTQEKQEITIAELIKLLK</sequence>
<dbReference type="EC" id="6.1.1.15" evidence="1"/>
<dbReference type="EMBL" id="AM233362">
    <property type="protein sequence ID" value="CAJ79090.1"/>
    <property type="molecule type" value="Genomic_DNA"/>
</dbReference>
<dbReference type="RefSeq" id="WP_010031693.1">
    <property type="nucleotide sequence ID" value="NZ_CP009694.1"/>
</dbReference>
<dbReference type="SMR" id="Q2A4E9"/>
<dbReference type="KEGG" id="ftl:FTL_0650"/>
<dbReference type="Proteomes" id="UP000001944">
    <property type="component" value="Chromosome"/>
</dbReference>
<dbReference type="GO" id="GO:0005829">
    <property type="term" value="C:cytosol"/>
    <property type="evidence" value="ECO:0007669"/>
    <property type="project" value="TreeGrafter"/>
</dbReference>
<dbReference type="GO" id="GO:0002161">
    <property type="term" value="F:aminoacyl-tRNA deacylase activity"/>
    <property type="evidence" value="ECO:0007669"/>
    <property type="project" value="InterPro"/>
</dbReference>
<dbReference type="GO" id="GO:0005524">
    <property type="term" value="F:ATP binding"/>
    <property type="evidence" value="ECO:0007669"/>
    <property type="project" value="UniProtKB-UniRule"/>
</dbReference>
<dbReference type="GO" id="GO:0004827">
    <property type="term" value="F:proline-tRNA ligase activity"/>
    <property type="evidence" value="ECO:0007669"/>
    <property type="project" value="UniProtKB-UniRule"/>
</dbReference>
<dbReference type="GO" id="GO:0006433">
    <property type="term" value="P:prolyl-tRNA aminoacylation"/>
    <property type="evidence" value="ECO:0007669"/>
    <property type="project" value="UniProtKB-UniRule"/>
</dbReference>
<dbReference type="CDD" id="cd04334">
    <property type="entry name" value="ProRS-INS"/>
    <property type="match status" value="1"/>
</dbReference>
<dbReference type="CDD" id="cd00861">
    <property type="entry name" value="ProRS_anticodon_short"/>
    <property type="match status" value="1"/>
</dbReference>
<dbReference type="CDD" id="cd00779">
    <property type="entry name" value="ProRS_core_prok"/>
    <property type="match status" value="1"/>
</dbReference>
<dbReference type="FunFam" id="3.30.930.10:FF:000015">
    <property type="entry name" value="Proline--tRNA ligase"/>
    <property type="match status" value="1"/>
</dbReference>
<dbReference type="Gene3D" id="3.40.50.800">
    <property type="entry name" value="Anticodon-binding domain"/>
    <property type="match status" value="1"/>
</dbReference>
<dbReference type="Gene3D" id="3.30.930.10">
    <property type="entry name" value="Bira Bifunctional Protein, Domain 2"/>
    <property type="match status" value="2"/>
</dbReference>
<dbReference type="HAMAP" id="MF_01569">
    <property type="entry name" value="Pro_tRNA_synth_type1"/>
    <property type="match status" value="1"/>
</dbReference>
<dbReference type="InterPro" id="IPR002314">
    <property type="entry name" value="aa-tRNA-synt_IIb"/>
</dbReference>
<dbReference type="InterPro" id="IPR006195">
    <property type="entry name" value="aa-tRNA-synth_II"/>
</dbReference>
<dbReference type="InterPro" id="IPR045864">
    <property type="entry name" value="aa-tRNA-synth_II/BPL/LPL"/>
</dbReference>
<dbReference type="InterPro" id="IPR004154">
    <property type="entry name" value="Anticodon-bd"/>
</dbReference>
<dbReference type="InterPro" id="IPR036621">
    <property type="entry name" value="Anticodon-bd_dom_sf"/>
</dbReference>
<dbReference type="InterPro" id="IPR002316">
    <property type="entry name" value="Pro-tRNA-ligase_IIa"/>
</dbReference>
<dbReference type="InterPro" id="IPR004500">
    <property type="entry name" value="Pro-tRNA-synth_IIa_bac-type"/>
</dbReference>
<dbReference type="InterPro" id="IPR023717">
    <property type="entry name" value="Pro-tRNA-Synthase_IIa_type1"/>
</dbReference>
<dbReference type="InterPro" id="IPR050062">
    <property type="entry name" value="Pro-tRNA_synthetase"/>
</dbReference>
<dbReference type="InterPro" id="IPR044140">
    <property type="entry name" value="ProRS_anticodon_short"/>
</dbReference>
<dbReference type="InterPro" id="IPR033730">
    <property type="entry name" value="ProRS_core_prok"/>
</dbReference>
<dbReference type="InterPro" id="IPR036754">
    <property type="entry name" value="YbaK/aa-tRNA-synt-asso_dom_sf"/>
</dbReference>
<dbReference type="InterPro" id="IPR007214">
    <property type="entry name" value="YbaK/aa-tRNA-synth-assoc-dom"/>
</dbReference>
<dbReference type="NCBIfam" id="NF006625">
    <property type="entry name" value="PRK09194.1"/>
    <property type="match status" value="1"/>
</dbReference>
<dbReference type="NCBIfam" id="TIGR00409">
    <property type="entry name" value="proS_fam_II"/>
    <property type="match status" value="1"/>
</dbReference>
<dbReference type="PANTHER" id="PTHR42753">
    <property type="entry name" value="MITOCHONDRIAL RIBOSOME PROTEIN L39/PROLYL-TRNA LIGASE FAMILY MEMBER"/>
    <property type="match status" value="1"/>
</dbReference>
<dbReference type="PANTHER" id="PTHR42753:SF2">
    <property type="entry name" value="PROLINE--TRNA LIGASE"/>
    <property type="match status" value="1"/>
</dbReference>
<dbReference type="Pfam" id="PF03129">
    <property type="entry name" value="HGTP_anticodon"/>
    <property type="match status" value="1"/>
</dbReference>
<dbReference type="Pfam" id="PF00587">
    <property type="entry name" value="tRNA-synt_2b"/>
    <property type="match status" value="1"/>
</dbReference>
<dbReference type="Pfam" id="PF04073">
    <property type="entry name" value="tRNA_edit"/>
    <property type="match status" value="1"/>
</dbReference>
<dbReference type="PRINTS" id="PR01046">
    <property type="entry name" value="TRNASYNTHPRO"/>
</dbReference>
<dbReference type="SUPFAM" id="SSF52954">
    <property type="entry name" value="Class II aaRS ABD-related"/>
    <property type="match status" value="1"/>
</dbReference>
<dbReference type="SUPFAM" id="SSF55681">
    <property type="entry name" value="Class II aaRS and biotin synthetases"/>
    <property type="match status" value="1"/>
</dbReference>
<dbReference type="SUPFAM" id="SSF55826">
    <property type="entry name" value="YbaK/ProRS associated domain"/>
    <property type="match status" value="1"/>
</dbReference>
<dbReference type="PROSITE" id="PS50862">
    <property type="entry name" value="AA_TRNA_LIGASE_II"/>
    <property type="match status" value="1"/>
</dbReference>
<comment type="function">
    <text evidence="1">Catalyzes the attachment of proline to tRNA(Pro) in a two-step reaction: proline is first activated by ATP to form Pro-AMP and then transferred to the acceptor end of tRNA(Pro). As ProRS can inadvertently accommodate and process non-cognate amino acids such as alanine and cysteine, to avoid such errors it has two additional distinct editing activities against alanine. One activity is designated as 'pretransfer' editing and involves the tRNA(Pro)-independent hydrolysis of activated Ala-AMP. The other activity is designated 'posttransfer' editing and involves deacylation of mischarged Ala-tRNA(Pro). The misacylated Cys-tRNA(Pro) is not edited by ProRS.</text>
</comment>
<comment type="catalytic activity">
    <reaction evidence="1">
        <text>tRNA(Pro) + L-proline + ATP = L-prolyl-tRNA(Pro) + AMP + diphosphate</text>
        <dbReference type="Rhea" id="RHEA:14305"/>
        <dbReference type="Rhea" id="RHEA-COMP:9700"/>
        <dbReference type="Rhea" id="RHEA-COMP:9702"/>
        <dbReference type="ChEBI" id="CHEBI:30616"/>
        <dbReference type="ChEBI" id="CHEBI:33019"/>
        <dbReference type="ChEBI" id="CHEBI:60039"/>
        <dbReference type="ChEBI" id="CHEBI:78442"/>
        <dbReference type="ChEBI" id="CHEBI:78532"/>
        <dbReference type="ChEBI" id="CHEBI:456215"/>
        <dbReference type="EC" id="6.1.1.15"/>
    </reaction>
</comment>
<comment type="subunit">
    <text evidence="1">Homodimer.</text>
</comment>
<comment type="subcellular location">
    <subcellularLocation>
        <location evidence="1">Cytoplasm</location>
    </subcellularLocation>
</comment>
<comment type="domain">
    <text evidence="1">Consists of three domains: the N-terminal catalytic domain, the editing domain and the C-terminal anticodon-binding domain.</text>
</comment>
<comment type="similarity">
    <text evidence="1">Belongs to the class-II aminoacyl-tRNA synthetase family. ProS type 1 subfamily.</text>
</comment>
<feature type="chain" id="PRO_0000248693" description="Proline--tRNA ligase">
    <location>
        <begin position="1"/>
        <end position="565"/>
    </location>
</feature>
<accession>Q2A4E9</accession>
<organism>
    <name type="scientific">Francisella tularensis subsp. holarctica (strain LVS)</name>
    <dbReference type="NCBI Taxonomy" id="376619"/>
    <lineage>
        <taxon>Bacteria</taxon>
        <taxon>Pseudomonadati</taxon>
        <taxon>Pseudomonadota</taxon>
        <taxon>Gammaproteobacteria</taxon>
        <taxon>Thiotrichales</taxon>
        <taxon>Francisellaceae</taxon>
        <taxon>Francisella</taxon>
    </lineage>
</organism>
<keyword id="KW-0030">Aminoacyl-tRNA synthetase</keyword>
<keyword id="KW-0067">ATP-binding</keyword>
<keyword id="KW-0963">Cytoplasm</keyword>
<keyword id="KW-0436">Ligase</keyword>
<keyword id="KW-0547">Nucleotide-binding</keyword>
<keyword id="KW-0648">Protein biosynthesis</keyword>
<keyword id="KW-1185">Reference proteome</keyword>
<reference key="1">
    <citation type="submission" date="2006-03" db="EMBL/GenBank/DDBJ databases">
        <title>Complete genome sequence of Francisella tularensis LVS (Live Vaccine Strain).</title>
        <authorList>
            <person name="Chain P."/>
            <person name="Larimer F."/>
            <person name="Land M."/>
            <person name="Stilwagen S."/>
            <person name="Larsson P."/>
            <person name="Bearden S."/>
            <person name="Chu M."/>
            <person name="Oyston P."/>
            <person name="Forsman M."/>
            <person name="Andersson S."/>
            <person name="Lindler L."/>
            <person name="Titball R."/>
            <person name="Garcia E."/>
        </authorList>
    </citation>
    <scope>NUCLEOTIDE SEQUENCE [LARGE SCALE GENOMIC DNA]</scope>
    <source>
        <strain>LVS</strain>
    </source>
</reference>
<proteinExistence type="inferred from homology"/>
<name>SYP_FRATH</name>
<gene>
    <name evidence="1" type="primary">proS</name>
    <name type="ordered locus">FTL_0650</name>
</gene>
<evidence type="ECO:0000255" key="1">
    <source>
        <dbReference type="HAMAP-Rule" id="MF_01569"/>
    </source>
</evidence>
<protein>
    <recommendedName>
        <fullName evidence="1">Proline--tRNA ligase</fullName>
        <ecNumber evidence="1">6.1.1.15</ecNumber>
    </recommendedName>
    <alternativeName>
        <fullName evidence="1">Prolyl-tRNA synthetase</fullName>
        <shortName evidence="1">ProRS</shortName>
    </alternativeName>
</protein>